<evidence type="ECO:0000255" key="1">
    <source>
        <dbReference type="HAMAP-Rule" id="MF_00235"/>
    </source>
</evidence>
<evidence type="ECO:0007829" key="2">
    <source>
        <dbReference type="PDB" id="4NP6"/>
    </source>
</evidence>
<feature type="chain" id="PRO_0000158882" description="Adenylate kinase">
    <location>
        <begin position="1"/>
        <end position="214"/>
    </location>
</feature>
<feature type="region of interest" description="NMP" evidence="1">
    <location>
        <begin position="30"/>
        <end position="59"/>
    </location>
</feature>
<feature type="region of interest" description="LID" evidence="1">
    <location>
        <begin position="122"/>
        <end position="159"/>
    </location>
</feature>
<feature type="binding site" evidence="1">
    <location>
        <begin position="10"/>
        <end position="15"/>
    </location>
    <ligand>
        <name>ATP</name>
        <dbReference type="ChEBI" id="CHEBI:30616"/>
    </ligand>
</feature>
<feature type="binding site" evidence="1">
    <location>
        <position position="31"/>
    </location>
    <ligand>
        <name>AMP</name>
        <dbReference type="ChEBI" id="CHEBI:456215"/>
    </ligand>
</feature>
<feature type="binding site" evidence="1">
    <location>
        <position position="36"/>
    </location>
    <ligand>
        <name>AMP</name>
        <dbReference type="ChEBI" id="CHEBI:456215"/>
    </ligand>
</feature>
<feature type="binding site" evidence="1">
    <location>
        <begin position="57"/>
        <end position="59"/>
    </location>
    <ligand>
        <name>AMP</name>
        <dbReference type="ChEBI" id="CHEBI:456215"/>
    </ligand>
</feature>
<feature type="binding site" evidence="1">
    <location>
        <begin position="85"/>
        <end position="88"/>
    </location>
    <ligand>
        <name>AMP</name>
        <dbReference type="ChEBI" id="CHEBI:456215"/>
    </ligand>
</feature>
<feature type="binding site" evidence="1">
    <location>
        <position position="92"/>
    </location>
    <ligand>
        <name>AMP</name>
        <dbReference type="ChEBI" id="CHEBI:456215"/>
    </ligand>
</feature>
<feature type="binding site" evidence="1">
    <location>
        <position position="123"/>
    </location>
    <ligand>
        <name>ATP</name>
        <dbReference type="ChEBI" id="CHEBI:30616"/>
    </ligand>
</feature>
<feature type="binding site" evidence="1">
    <location>
        <begin position="132"/>
        <end position="133"/>
    </location>
    <ligand>
        <name>ATP</name>
        <dbReference type="ChEBI" id="CHEBI:30616"/>
    </ligand>
</feature>
<feature type="binding site" evidence="1">
    <location>
        <position position="156"/>
    </location>
    <ligand>
        <name>AMP</name>
        <dbReference type="ChEBI" id="CHEBI:456215"/>
    </ligand>
</feature>
<feature type="binding site" evidence="1">
    <location>
        <position position="167"/>
    </location>
    <ligand>
        <name>AMP</name>
        <dbReference type="ChEBI" id="CHEBI:456215"/>
    </ligand>
</feature>
<feature type="binding site" evidence="1">
    <location>
        <position position="200"/>
    </location>
    <ligand>
        <name>ATP</name>
        <dbReference type="ChEBI" id="CHEBI:30616"/>
    </ligand>
</feature>
<feature type="strand" evidence="2">
    <location>
        <begin position="1"/>
        <end position="7"/>
    </location>
</feature>
<feature type="helix" evidence="2">
    <location>
        <begin position="14"/>
        <end position="24"/>
    </location>
</feature>
<feature type="strand" evidence="2">
    <location>
        <begin position="28"/>
        <end position="30"/>
    </location>
</feature>
<feature type="helix" evidence="2">
    <location>
        <begin position="31"/>
        <end position="41"/>
    </location>
</feature>
<feature type="helix" evidence="2">
    <location>
        <begin position="44"/>
        <end position="54"/>
    </location>
</feature>
<feature type="helix" evidence="2">
    <location>
        <begin position="61"/>
        <end position="71"/>
    </location>
</feature>
<feature type="helix" evidence="2">
    <location>
        <begin position="75"/>
        <end position="77"/>
    </location>
</feature>
<feature type="strand" evidence="2">
    <location>
        <begin position="80"/>
        <end position="85"/>
    </location>
</feature>
<feature type="helix" evidence="2">
    <location>
        <begin position="90"/>
        <end position="97"/>
    </location>
</feature>
<feature type="turn" evidence="2">
    <location>
        <begin position="98"/>
        <end position="100"/>
    </location>
</feature>
<feature type="strand" evidence="2">
    <location>
        <begin position="104"/>
        <end position="110"/>
    </location>
</feature>
<feature type="helix" evidence="2">
    <location>
        <begin position="113"/>
        <end position="120"/>
    </location>
</feature>
<feature type="strand" evidence="2">
    <location>
        <begin position="123"/>
        <end position="125"/>
    </location>
</feature>
<feature type="turn" evidence="2">
    <location>
        <begin position="127"/>
        <end position="129"/>
    </location>
</feature>
<feature type="strand" evidence="2">
    <location>
        <begin position="132"/>
        <end position="134"/>
    </location>
</feature>
<feature type="turn" evidence="2">
    <location>
        <begin position="135"/>
        <end position="137"/>
    </location>
</feature>
<feature type="turn" evidence="2">
    <location>
        <begin position="147"/>
        <end position="149"/>
    </location>
</feature>
<feature type="helix" evidence="2">
    <location>
        <begin position="157"/>
        <end position="159"/>
    </location>
</feature>
<feature type="helix" evidence="2">
    <location>
        <begin position="161"/>
        <end position="187"/>
    </location>
</feature>
<feature type="strand" evidence="2">
    <location>
        <begin position="190"/>
        <end position="197"/>
    </location>
</feature>
<feature type="helix" evidence="2">
    <location>
        <begin position="202"/>
        <end position="212"/>
    </location>
</feature>
<organism>
    <name type="scientific">Vibrio cholerae serotype O1 (strain ATCC 39315 / El Tor Inaba N16961)</name>
    <dbReference type="NCBI Taxonomy" id="243277"/>
    <lineage>
        <taxon>Bacteria</taxon>
        <taxon>Pseudomonadati</taxon>
        <taxon>Pseudomonadota</taxon>
        <taxon>Gammaproteobacteria</taxon>
        <taxon>Vibrionales</taxon>
        <taxon>Vibrionaceae</taxon>
        <taxon>Vibrio</taxon>
    </lineage>
</organism>
<keyword id="KW-0002">3D-structure</keyword>
<keyword id="KW-0067">ATP-binding</keyword>
<keyword id="KW-0963">Cytoplasm</keyword>
<keyword id="KW-0418">Kinase</keyword>
<keyword id="KW-0545">Nucleotide biosynthesis</keyword>
<keyword id="KW-0547">Nucleotide-binding</keyword>
<keyword id="KW-1185">Reference proteome</keyword>
<keyword id="KW-0808">Transferase</keyword>
<comment type="function">
    <text evidence="1">Catalyzes the reversible transfer of the terminal phosphate group between ATP and AMP. Plays an important role in cellular energy homeostasis and in adenine nucleotide metabolism.</text>
</comment>
<comment type="catalytic activity">
    <reaction evidence="1">
        <text>AMP + ATP = 2 ADP</text>
        <dbReference type="Rhea" id="RHEA:12973"/>
        <dbReference type="ChEBI" id="CHEBI:30616"/>
        <dbReference type="ChEBI" id="CHEBI:456215"/>
        <dbReference type="ChEBI" id="CHEBI:456216"/>
        <dbReference type="EC" id="2.7.4.3"/>
    </reaction>
</comment>
<comment type="pathway">
    <text evidence="1">Purine metabolism; AMP biosynthesis via salvage pathway; AMP from ADP: step 1/1.</text>
</comment>
<comment type="subunit">
    <text evidence="1">Monomer.</text>
</comment>
<comment type="subcellular location">
    <subcellularLocation>
        <location evidence="1">Cytoplasm</location>
    </subcellularLocation>
</comment>
<comment type="domain">
    <text evidence="1">Consists of three domains, a large central CORE domain and two small peripheral domains, NMPbind and LID, which undergo movements during catalysis. The LID domain closes over the site of phosphoryl transfer upon ATP binding. Assembling and dissambling the active center during each catalytic cycle provides an effective means to prevent ATP hydrolysis.</text>
</comment>
<comment type="similarity">
    <text evidence="1">Belongs to the adenylate kinase family.</text>
</comment>
<name>KAD_VIBCH</name>
<gene>
    <name evidence="1" type="primary">adk</name>
    <name type="ordered locus">VC_0986</name>
</gene>
<accession>Q9KTB7</accession>
<sequence length="214" mass="23277">MRIILLGAPGAGKGTQAQFIMEKFGIPQISTGDMLRAAIKAGTELGKQAKAVIDAGQLVSDDIILGLIKERIAQADCEKGFLLDGFPRTIPQADGLKEMGINVDYVIEFDVADDVIVERMAGRRAHLPSGRTYHVVYNPPKVEGKDDVTGEDLVIREDDKEETVRARLNVYHTQTAPLIEYYGKEAAAGKTQYLKFDGTKQVSEVSADIAKALA</sequence>
<proteinExistence type="evidence at protein level"/>
<dbReference type="EC" id="2.7.4.3" evidence="1"/>
<dbReference type="EMBL" id="AE003852">
    <property type="protein sequence ID" value="AAF94147.1"/>
    <property type="molecule type" value="Genomic_DNA"/>
</dbReference>
<dbReference type="PIR" id="C82255">
    <property type="entry name" value="C82255"/>
</dbReference>
<dbReference type="RefSeq" id="NP_230632.1">
    <property type="nucleotide sequence ID" value="NC_002505.1"/>
</dbReference>
<dbReference type="RefSeq" id="WP_001220222.1">
    <property type="nucleotide sequence ID" value="NZ_LT906614.1"/>
</dbReference>
<dbReference type="PDB" id="4NP6">
    <property type="method" value="X-ray"/>
    <property type="resolution" value="2.00 A"/>
    <property type="chains" value="A/B/C/D=1-214"/>
</dbReference>
<dbReference type="PDBsum" id="4NP6"/>
<dbReference type="SMR" id="Q9KTB7"/>
<dbReference type="STRING" id="243277.VC_0986"/>
<dbReference type="DNASU" id="2614239"/>
<dbReference type="EnsemblBacteria" id="AAF94147">
    <property type="protein sequence ID" value="AAF94147"/>
    <property type="gene ID" value="VC_0986"/>
</dbReference>
<dbReference type="GeneID" id="89514907"/>
<dbReference type="KEGG" id="vch:VC_0986"/>
<dbReference type="PATRIC" id="fig|243277.26.peg.939"/>
<dbReference type="eggNOG" id="COG0563">
    <property type="taxonomic scope" value="Bacteria"/>
</dbReference>
<dbReference type="HOGENOM" id="CLU_032354_1_2_6"/>
<dbReference type="UniPathway" id="UPA00588">
    <property type="reaction ID" value="UER00649"/>
</dbReference>
<dbReference type="EvolutionaryTrace" id="Q9KTB7"/>
<dbReference type="Proteomes" id="UP000000584">
    <property type="component" value="Chromosome 1"/>
</dbReference>
<dbReference type="GO" id="GO:0005737">
    <property type="term" value="C:cytoplasm"/>
    <property type="evidence" value="ECO:0000318"/>
    <property type="project" value="GO_Central"/>
</dbReference>
<dbReference type="GO" id="GO:0005829">
    <property type="term" value="C:cytosol"/>
    <property type="evidence" value="ECO:0000318"/>
    <property type="project" value="GO_Central"/>
</dbReference>
<dbReference type="GO" id="GO:0004017">
    <property type="term" value="F:adenylate kinase activity"/>
    <property type="evidence" value="ECO:0000318"/>
    <property type="project" value="GO_Central"/>
</dbReference>
<dbReference type="GO" id="GO:0005524">
    <property type="term" value="F:ATP binding"/>
    <property type="evidence" value="ECO:0007669"/>
    <property type="project" value="UniProtKB-UniRule"/>
</dbReference>
<dbReference type="GO" id="GO:0004550">
    <property type="term" value="F:nucleoside diphosphate kinase activity"/>
    <property type="evidence" value="ECO:0000318"/>
    <property type="project" value="GO_Central"/>
</dbReference>
<dbReference type="GO" id="GO:0044209">
    <property type="term" value="P:AMP salvage"/>
    <property type="evidence" value="ECO:0007669"/>
    <property type="project" value="UniProtKB-UniRule"/>
</dbReference>
<dbReference type="GO" id="GO:0009132">
    <property type="term" value="P:nucleoside diphosphate metabolic process"/>
    <property type="evidence" value="ECO:0000318"/>
    <property type="project" value="GO_Central"/>
</dbReference>
<dbReference type="GO" id="GO:0009123">
    <property type="term" value="P:nucleoside monophosphate metabolic process"/>
    <property type="evidence" value="ECO:0000318"/>
    <property type="project" value="GO_Central"/>
</dbReference>
<dbReference type="CDD" id="cd01428">
    <property type="entry name" value="ADK"/>
    <property type="match status" value="1"/>
</dbReference>
<dbReference type="FunFam" id="3.40.50.300:FF:000106">
    <property type="entry name" value="Adenylate kinase mitochondrial"/>
    <property type="match status" value="1"/>
</dbReference>
<dbReference type="Gene3D" id="3.40.50.300">
    <property type="entry name" value="P-loop containing nucleotide triphosphate hydrolases"/>
    <property type="match status" value="1"/>
</dbReference>
<dbReference type="HAMAP" id="MF_00235">
    <property type="entry name" value="Adenylate_kinase_Adk"/>
    <property type="match status" value="1"/>
</dbReference>
<dbReference type="InterPro" id="IPR006259">
    <property type="entry name" value="Adenyl_kin_sub"/>
</dbReference>
<dbReference type="InterPro" id="IPR000850">
    <property type="entry name" value="Adenylat/UMP-CMP_kin"/>
</dbReference>
<dbReference type="InterPro" id="IPR033690">
    <property type="entry name" value="Adenylat_kinase_CS"/>
</dbReference>
<dbReference type="InterPro" id="IPR007862">
    <property type="entry name" value="Adenylate_kinase_lid-dom"/>
</dbReference>
<dbReference type="InterPro" id="IPR027417">
    <property type="entry name" value="P-loop_NTPase"/>
</dbReference>
<dbReference type="NCBIfam" id="TIGR01351">
    <property type="entry name" value="adk"/>
    <property type="match status" value="1"/>
</dbReference>
<dbReference type="NCBIfam" id="NF001379">
    <property type="entry name" value="PRK00279.1-1"/>
    <property type="match status" value="1"/>
</dbReference>
<dbReference type="NCBIfam" id="NF001380">
    <property type="entry name" value="PRK00279.1-2"/>
    <property type="match status" value="1"/>
</dbReference>
<dbReference type="NCBIfam" id="NF001381">
    <property type="entry name" value="PRK00279.1-3"/>
    <property type="match status" value="1"/>
</dbReference>
<dbReference type="NCBIfam" id="NF011100">
    <property type="entry name" value="PRK14527.1"/>
    <property type="match status" value="1"/>
</dbReference>
<dbReference type="PANTHER" id="PTHR23359">
    <property type="entry name" value="NUCLEOTIDE KINASE"/>
    <property type="match status" value="1"/>
</dbReference>
<dbReference type="Pfam" id="PF00406">
    <property type="entry name" value="ADK"/>
    <property type="match status" value="1"/>
</dbReference>
<dbReference type="Pfam" id="PF05191">
    <property type="entry name" value="ADK_lid"/>
    <property type="match status" value="1"/>
</dbReference>
<dbReference type="PRINTS" id="PR00094">
    <property type="entry name" value="ADENYLTKNASE"/>
</dbReference>
<dbReference type="SUPFAM" id="SSF52540">
    <property type="entry name" value="P-loop containing nucleoside triphosphate hydrolases"/>
    <property type="match status" value="1"/>
</dbReference>
<dbReference type="PROSITE" id="PS00113">
    <property type="entry name" value="ADENYLATE_KINASE"/>
    <property type="match status" value="1"/>
</dbReference>
<reference key="1">
    <citation type="journal article" date="2000" name="Nature">
        <title>DNA sequence of both chromosomes of the cholera pathogen Vibrio cholerae.</title>
        <authorList>
            <person name="Heidelberg J.F."/>
            <person name="Eisen J.A."/>
            <person name="Nelson W.C."/>
            <person name="Clayton R.A."/>
            <person name="Gwinn M.L."/>
            <person name="Dodson R.J."/>
            <person name="Haft D.H."/>
            <person name="Hickey E.K."/>
            <person name="Peterson J.D."/>
            <person name="Umayam L.A."/>
            <person name="Gill S.R."/>
            <person name="Nelson K.E."/>
            <person name="Read T.D."/>
            <person name="Tettelin H."/>
            <person name="Richardson D.L."/>
            <person name="Ermolaeva M.D."/>
            <person name="Vamathevan J.J."/>
            <person name="Bass S."/>
            <person name="Qin H."/>
            <person name="Dragoi I."/>
            <person name="Sellers P."/>
            <person name="McDonald L.A."/>
            <person name="Utterback T.R."/>
            <person name="Fleischmann R.D."/>
            <person name="Nierman W.C."/>
            <person name="White O."/>
            <person name="Salzberg S.L."/>
            <person name="Smith H.O."/>
            <person name="Colwell R.R."/>
            <person name="Mekalanos J.J."/>
            <person name="Venter J.C."/>
            <person name="Fraser C.M."/>
        </authorList>
    </citation>
    <scope>NUCLEOTIDE SEQUENCE [LARGE SCALE GENOMIC DNA]</scope>
    <source>
        <strain>ATCC 39315 / El Tor Inaba N16961</strain>
    </source>
</reference>
<protein>
    <recommendedName>
        <fullName evidence="1">Adenylate kinase</fullName>
        <shortName evidence="1">AK</shortName>
        <ecNumber evidence="1">2.7.4.3</ecNumber>
    </recommendedName>
    <alternativeName>
        <fullName evidence="1">ATP-AMP transphosphorylase</fullName>
    </alternativeName>
    <alternativeName>
        <fullName evidence="1">ATP:AMP phosphotransferase</fullName>
    </alternativeName>
    <alternativeName>
        <fullName evidence="1">Adenylate monophosphate kinase</fullName>
    </alternativeName>
</protein>